<proteinExistence type="inferred from homology"/>
<accession>Q2YVY2</accession>
<gene>
    <name evidence="1" type="primary">mfd</name>
    <name type="ordered locus">SAB0452</name>
</gene>
<reference key="1">
    <citation type="journal article" date="2007" name="PLoS ONE">
        <title>Molecular correlates of host specialization in Staphylococcus aureus.</title>
        <authorList>
            <person name="Herron-Olson L."/>
            <person name="Fitzgerald J.R."/>
            <person name="Musser J.M."/>
            <person name="Kapur V."/>
        </authorList>
    </citation>
    <scope>NUCLEOTIDE SEQUENCE [LARGE SCALE GENOMIC DNA]</scope>
    <source>
        <strain>bovine RF122 / ET3-1</strain>
    </source>
</reference>
<comment type="function">
    <text evidence="1">Couples transcription and DNA repair by recognizing RNA polymerase (RNAP) stalled at DNA lesions. Mediates ATP-dependent release of RNAP and its truncated transcript from the DNA, and recruitment of nucleotide excision repair machinery to the damaged site.</text>
</comment>
<comment type="subcellular location">
    <subcellularLocation>
        <location evidence="1">Cytoplasm</location>
    </subcellularLocation>
</comment>
<comment type="similarity">
    <text evidence="1">In the N-terminal section; belongs to the UvrB family.</text>
</comment>
<comment type="similarity">
    <text evidence="1">In the C-terminal section; belongs to the helicase family. RecG subfamily.</text>
</comment>
<sequence>MTILTTLIKEDNHFQDLNQVFGQANTLVTGLSPSAKVTMIAEKYAQSNQQLLLITNNLYQADKLETDLLQFIDAEELYKYPVQDIMTEEFSTQSPQLMSERIRTLTALAQGKKGLFIVPLNGLKKWLTSVEMWQNHQMTLRVGEDIDVDQFLNKLVNMGYKRESVVSHIGEFSLRGGIIDIFPLIGEPIRIELFDTEIDSIRDFDVETQRSKDNIEEVDITTASDYIITEEVIRHLKEELKTAYENTRPKIDKSVRNDLKETYESFKLFESTYFDHQILRRLVAFMYETPSTIIDYFQKDAIIAVDEFNRIKETEESLTVESDSFISNIIESGNGFIGQSFIKYDDFETLIEGYPVTYFSLFATTMPIKLNHIIKFSCKPVQQFYGQYDIMRSEFQRYVNQNYHIVVLVETETKVERMQAMLSEMHIPSITKLHRSMSSGQAVIIEGSLSEGFELPDMGLVVITERELFKSKQKKQRKRTKAISNAEKIKSYQDLNVGDYIVHVHHGVGRYLGVETLEVGQTHRDYIKLQYKGTDQLFVPVDQMDQVQKYVASEDKTPKLNKLGGSEWKKTKAKVQQSVEDIAEELIDLYKEREMAEGYQYGEDTAEQTTFELDFPYELTPDQAKSIDEIKDDMQKSRPMDRLLCGDVGYGKTEVAVRAAFKAVMEGKQVAFLVPTTILAQQHYETLIERMQDFPVEIQLMSRFRTPKEIKQTKEGLKTGFVDIVVGTHKLLSKDIQYKDLGLLIVDEEQRFGVRHKERIKTLKHNVDVLTLTATPIPRTLHMSMLGVRDLSVIETPPENRFPVQTYVLEQNMSFIKEALERELSRDGQVFYLYNKVQSIYEKREQLQMLMPDANIAVAHGQMTERDLEETMLSFINNEYDILVTTTIIETGVDVPNANTLIIEDADRFGLSQLYQLRGRVGRSSRIGYAYFLHPANKVLTETAEDRLQAIKEFTELGSGFKIAMRDLNIRGAGNLLGKQQHGFIDTVGFDLYSQMLEEAVNEKRGIKEPESEVPEVEVDLNLDAYLPTEYIANEQAKIEIYKKLRKTETFDQIIDIKDELIDRFNDYPVEVARLLDIVEIKVHALHSGITLIKDKGKIIDIHLSVKATENIDGEVLFKATQPLGRTMKVGVQNNAMTITLTKQNQWLDSLKFLVKCIEESMRISDEA</sequence>
<name>MFD_STAAB</name>
<protein>
    <recommendedName>
        <fullName evidence="1">Transcription-repair-coupling factor</fullName>
        <shortName evidence="1">TRCF</shortName>
        <ecNumber evidence="1">3.6.4.-</ecNumber>
    </recommendedName>
</protein>
<keyword id="KW-0067">ATP-binding</keyword>
<keyword id="KW-0963">Cytoplasm</keyword>
<keyword id="KW-0227">DNA damage</keyword>
<keyword id="KW-0234">DNA repair</keyword>
<keyword id="KW-0238">DNA-binding</keyword>
<keyword id="KW-0347">Helicase</keyword>
<keyword id="KW-0378">Hydrolase</keyword>
<keyword id="KW-0547">Nucleotide-binding</keyword>
<feature type="chain" id="PRO_0000282667" description="Transcription-repair-coupling factor">
    <location>
        <begin position="1"/>
        <end position="1168"/>
    </location>
</feature>
<feature type="domain" description="Helicase ATP-binding" evidence="1">
    <location>
        <begin position="633"/>
        <end position="794"/>
    </location>
</feature>
<feature type="domain" description="Helicase C-terminal" evidence="1">
    <location>
        <begin position="808"/>
        <end position="969"/>
    </location>
</feature>
<feature type="short sequence motif" description="DEEQ box">
    <location>
        <begin position="747"/>
        <end position="750"/>
    </location>
</feature>
<feature type="binding site" evidence="1">
    <location>
        <begin position="646"/>
        <end position="653"/>
    </location>
    <ligand>
        <name>ATP</name>
        <dbReference type="ChEBI" id="CHEBI:30616"/>
    </ligand>
</feature>
<dbReference type="EC" id="3.6.4.-" evidence="1"/>
<dbReference type="EMBL" id="AJ938182">
    <property type="protein sequence ID" value="CAI80140.1"/>
    <property type="molecule type" value="Genomic_DNA"/>
</dbReference>
<dbReference type="RefSeq" id="WP_000154238.1">
    <property type="nucleotide sequence ID" value="NC_007622.1"/>
</dbReference>
<dbReference type="SMR" id="Q2YVY2"/>
<dbReference type="KEGG" id="sab:SAB0452"/>
<dbReference type="HOGENOM" id="CLU_005122_1_3_9"/>
<dbReference type="GO" id="GO:0005737">
    <property type="term" value="C:cytoplasm"/>
    <property type="evidence" value="ECO:0007669"/>
    <property type="project" value="UniProtKB-SubCell"/>
</dbReference>
<dbReference type="GO" id="GO:0005524">
    <property type="term" value="F:ATP binding"/>
    <property type="evidence" value="ECO:0007669"/>
    <property type="project" value="UniProtKB-UniRule"/>
</dbReference>
<dbReference type="GO" id="GO:0003684">
    <property type="term" value="F:damaged DNA binding"/>
    <property type="evidence" value="ECO:0007669"/>
    <property type="project" value="InterPro"/>
</dbReference>
<dbReference type="GO" id="GO:0003678">
    <property type="term" value="F:DNA helicase activity"/>
    <property type="evidence" value="ECO:0007669"/>
    <property type="project" value="TreeGrafter"/>
</dbReference>
<dbReference type="GO" id="GO:0016787">
    <property type="term" value="F:hydrolase activity"/>
    <property type="evidence" value="ECO:0007669"/>
    <property type="project" value="UniProtKB-KW"/>
</dbReference>
<dbReference type="GO" id="GO:0006355">
    <property type="term" value="P:regulation of DNA-templated transcription"/>
    <property type="evidence" value="ECO:0007669"/>
    <property type="project" value="UniProtKB-UniRule"/>
</dbReference>
<dbReference type="GO" id="GO:0000716">
    <property type="term" value="P:transcription-coupled nucleotide-excision repair, DNA damage recognition"/>
    <property type="evidence" value="ECO:0007669"/>
    <property type="project" value="UniProtKB-UniRule"/>
</dbReference>
<dbReference type="CDD" id="cd17991">
    <property type="entry name" value="DEXHc_TRCF"/>
    <property type="match status" value="1"/>
</dbReference>
<dbReference type="FunFam" id="3.40.50.300:FF:000546">
    <property type="entry name" value="Transcription-repair-coupling factor"/>
    <property type="match status" value="1"/>
</dbReference>
<dbReference type="Gene3D" id="2.40.10.170">
    <property type="match status" value="1"/>
</dbReference>
<dbReference type="Gene3D" id="3.40.50.11140">
    <property type="match status" value="1"/>
</dbReference>
<dbReference type="Gene3D" id="3.40.50.11180">
    <property type="match status" value="1"/>
</dbReference>
<dbReference type="Gene3D" id="3.40.50.300">
    <property type="entry name" value="P-loop containing nucleotide triphosphate hydrolases"/>
    <property type="match status" value="2"/>
</dbReference>
<dbReference type="Gene3D" id="3.30.2060.10">
    <property type="entry name" value="Penicillin-binding protein 1b domain"/>
    <property type="match status" value="1"/>
</dbReference>
<dbReference type="Gene3D" id="3.90.1150.50">
    <property type="entry name" value="Transcription-repair-coupling factor, D7 domain"/>
    <property type="match status" value="1"/>
</dbReference>
<dbReference type="HAMAP" id="MF_00969">
    <property type="entry name" value="TRCF"/>
    <property type="match status" value="1"/>
</dbReference>
<dbReference type="InterPro" id="IPR003711">
    <property type="entry name" value="CarD-like/TRCF_RID"/>
</dbReference>
<dbReference type="InterPro" id="IPR036101">
    <property type="entry name" value="CarD-like/TRCF_RID_sf"/>
</dbReference>
<dbReference type="InterPro" id="IPR011545">
    <property type="entry name" value="DEAD/DEAH_box_helicase_dom"/>
</dbReference>
<dbReference type="InterPro" id="IPR014001">
    <property type="entry name" value="Helicase_ATP-bd"/>
</dbReference>
<dbReference type="InterPro" id="IPR001650">
    <property type="entry name" value="Helicase_C-like"/>
</dbReference>
<dbReference type="InterPro" id="IPR004576">
    <property type="entry name" value="Mfd"/>
</dbReference>
<dbReference type="InterPro" id="IPR048635">
    <property type="entry name" value="MFD_D3"/>
</dbReference>
<dbReference type="InterPro" id="IPR027417">
    <property type="entry name" value="P-loop_NTPase"/>
</dbReference>
<dbReference type="InterPro" id="IPR047112">
    <property type="entry name" value="RecG/Mfd"/>
</dbReference>
<dbReference type="InterPro" id="IPR037235">
    <property type="entry name" value="TRCF-like_C_D7"/>
</dbReference>
<dbReference type="InterPro" id="IPR005118">
    <property type="entry name" value="TRCF_C"/>
</dbReference>
<dbReference type="InterPro" id="IPR041471">
    <property type="entry name" value="UvrB_inter"/>
</dbReference>
<dbReference type="NCBIfam" id="TIGR00580">
    <property type="entry name" value="mfd"/>
    <property type="match status" value="1"/>
</dbReference>
<dbReference type="PANTHER" id="PTHR47964">
    <property type="entry name" value="ATP-DEPENDENT DNA HELICASE HOMOLOG RECG, CHLOROPLASTIC"/>
    <property type="match status" value="1"/>
</dbReference>
<dbReference type="PANTHER" id="PTHR47964:SF1">
    <property type="entry name" value="ATP-DEPENDENT DNA HELICASE HOMOLOG RECG, CHLOROPLASTIC"/>
    <property type="match status" value="1"/>
</dbReference>
<dbReference type="Pfam" id="PF02559">
    <property type="entry name" value="CarD_TRCF_RID"/>
    <property type="match status" value="1"/>
</dbReference>
<dbReference type="Pfam" id="PF00270">
    <property type="entry name" value="DEAD"/>
    <property type="match status" value="1"/>
</dbReference>
<dbReference type="Pfam" id="PF00271">
    <property type="entry name" value="Helicase_C"/>
    <property type="match status" value="1"/>
</dbReference>
<dbReference type="Pfam" id="PF21132">
    <property type="entry name" value="MFD_D3"/>
    <property type="match status" value="1"/>
</dbReference>
<dbReference type="Pfam" id="PF03461">
    <property type="entry name" value="TRCF"/>
    <property type="match status" value="1"/>
</dbReference>
<dbReference type="Pfam" id="PF17757">
    <property type="entry name" value="UvrB_inter"/>
    <property type="match status" value="1"/>
</dbReference>
<dbReference type="SMART" id="SM01058">
    <property type="entry name" value="CarD_TRCF"/>
    <property type="match status" value="1"/>
</dbReference>
<dbReference type="SMART" id="SM00487">
    <property type="entry name" value="DEXDc"/>
    <property type="match status" value="1"/>
</dbReference>
<dbReference type="SMART" id="SM00490">
    <property type="entry name" value="HELICc"/>
    <property type="match status" value="1"/>
</dbReference>
<dbReference type="SMART" id="SM00982">
    <property type="entry name" value="TRCF"/>
    <property type="match status" value="1"/>
</dbReference>
<dbReference type="SUPFAM" id="SSF141259">
    <property type="entry name" value="CarD-like"/>
    <property type="match status" value="1"/>
</dbReference>
<dbReference type="SUPFAM" id="SSF52540">
    <property type="entry name" value="P-loop containing nucleoside triphosphate hydrolases"/>
    <property type="match status" value="4"/>
</dbReference>
<dbReference type="SUPFAM" id="SSF143517">
    <property type="entry name" value="TRCF domain-like"/>
    <property type="match status" value="1"/>
</dbReference>
<dbReference type="PROSITE" id="PS51192">
    <property type="entry name" value="HELICASE_ATP_BIND_1"/>
    <property type="match status" value="1"/>
</dbReference>
<dbReference type="PROSITE" id="PS51194">
    <property type="entry name" value="HELICASE_CTER"/>
    <property type="match status" value="1"/>
</dbReference>
<evidence type="ECO:0000255" key="1">
    <source>
        <dbReference type="HAMAP-Rule" id="MF_00969"/>
    </source>
</evidence>
<organism>
    <name type="scientific">Staphylococcus aureus (strain bovine RF122 / ET3-1)</name>
    <dbReference type="NCBI Taxonomy" id="273036"/>
    <lineage>
        <taxon>Bacteria</taxon>
        <taxon>Bacillati</taxon>
        <taxon>Bacillota</taxon>
        <taxon>Bacilli</taxon>
        <taxon>Bacillales</taxon>
        <taxon>Staphylococcaceae</taxon>
        <taxon>Staphylococcus</taxon>
    </lineage>
</organism>